<protein>
    <recommendedName>
        <fullName>UPF0213 protein BCE33L0031</fullName>
    </recommendedName>
</protein>
<feature type="chain" id="PRO_1000063658" description="UPF0213 protein BCE33L0031">
    <location>
        <begin position="1"/>
        <end position="96"/>
    </location>
</feature>
<feature type="domain" description="GIY-YIG" evidence="1">
    <location>
        <begin position="4"/>
        <end position="79"/>
    </location>
</feature>
<proteinExistence type="inferred from homology"/>
<comment type="similarity">
    <text evidence="2">Belongs to the UPF0213 family.</text>
</comment>
<name>Y031_BACCZ</name>
<dbReference type="EMBL" id="CP000001">
    <property type="protein sequence ID" value="AAU20199.1"/>
    <property type="molecule type" value="Genomic_DNA"/>
</dbReference>
<dbReference type="RefSeq" id="WP_000414342.1">
    <property type="nucleotide sequence ID" value="NZ_CP009968.1"/>
</dbReference>
<dbReference type="SMR" id="Q63HH3"/>
<dbReference type="KEGG" id="bcz:BCE33L0031"/>
<dbReference type="PATRIC" id="fig|288681.22.peg.124"/>
<dbReference type="Proteomes" id="UP000002612">
    <property type="component" value="Chromosome"/>
</dbReference>
<dbReference type="CDD" id="cd10456">
    <property type="entry name" value="GIY-YIG_UPF0213"/>
    <property type="match status" value="1"/>
</dbReference>
<dbReference type="Gene3D" id="3.40.1440.10">
    <property type="entry name" value="GIY-YIG endonuclease"/>
    <property type="match status" value="1"/>
</dbReference>
<dbReference type="InterPro" id="IPR000305">
    <property type="entry name" value="GIY-YIG_endonuc"/>
</dbReference>
<dbReference type="InterPro" id="IPR035901">
    <property type="entry name" value="GIY-YIG_endonuc_sf"/>
</dbReference>
<dbReference type="InterPro" id="IPR050190">
    <property type="entry name" value="UPF0213_domain"/>
</dbReference>
<dbReference type="PANTHER" id="PTHR34477">
    <property type="entry name" value="UPF0213 PROTEIN YHBQ"/>
    <property type="match status" value="1"/>
</dbReference>
<dbReference type="PANTHER" id="PTHR34477:SF1">
    <property type="entry name" value="UPF0213 PROTEIN YHBQ"/>
    <property type="match status" value="1"/>
</dbReference>
<dbReference type="Pfam" id="PF01541">
    <property type="entry name" value="GIY-YIG"/>
    <property type="match status" value="1"/>
</dbReference>
<dbReference type="SUPFAM" id="SSF82771">
    <property type="entry name" value="GIY-YIG endonuclease"/>
    <property type="match status" value="1"/>
</dbReference>
<dbReference type="PROSITE" id="PS50164">
    <property type="entry name" value="GIY_YIG"/>
    <property type="match status" value="1"/>
</dbReference>
<organism>
    <name type="scientific">Bacillus cereus (strain ZK / E33L)</name>
    <dbReference type="NCBI Taxonomy" id="288681"/>
    <lineage>
        <taxon>Bacteria</taxon>
        <taxon>Bacillati</taxon>
        <taxon>Bacillota</taxon>
        <taxon>Bacilli</taxon>
        <taxon>Bacillales</taxon>
        <taxon>Bacillaceae</taxon>
        <taxon>Bacillus</taxon>
        <taxon>Bacillus cereus group</taxon>
    </lineage>
</organism>
<gene>
    <name type="ordered locus">BCE33L0031</name>
</gene>
<sequence length="96" mass="11455">MEKNKHCFYVVECSDGSYYAGYTNHIEKRIGTHNSGRGAKYTRARLPVVLKYVEFHEDKRTAMQAEYYFKQLNRKQKEEYMQKGERYVATKKLSTK</sequence>
<evidence type="ECO:0000255" key="1">
    <source>
        <dbReference type="PROSITE-ProRule" id="PRU00977"/>
    </source>
</evidence>
<evidence type="ECO:0000305" key="2"/>
<reference key="1">
    <citation type="journal article" date="2006" name="J. Bacteriol.">
        <title>Pathogenomic sequence analysis of Bacillus cereus and Bacillus thuringiensis isolates closely related to Bacillus anthracis.</title>
        <authorList>
            <person name="Han C.S."/>
            <person name="Xie G."/>
            <person name="Challacombe J.F."/>
            <person name="Altherr M.R."/>
            <person name="Bhotika S.S."/>
            <person name="Bruce D."/>
            <person name="Campbell C.S."/>
            <person name="Campbell M.L."/>
            <person name="Chen J."/>
            <person name="Chertkov O."/>
            <person name="Cleland C."/>
            <person name="Dimitrijevic M."/>
            <person name="Doggett N.A."/>
            <person name="Fawcett J.J."/>
            <person name="Glavina T."/>
            <person name="Goodwin L.A."/>
            <person name="Hill K.K."/>
            <person name="Hitchcock P."/>
            <person name="Jackson P.J."/>
            <person name="Keim P."/>
            <person name="Kewalramani A.R."/>
            <person name="Longmire J."/>
            <person name="Lucas S."/>
            <person name="Malfatti S."/>
            <person name="McMurry K."/>
            <person name="Meincke L.J."/>
            <person name="Misra M."/>
            <person name="Moseman B.L."/>
            <person name="Mundt M."/>
            <person name="Munk A.C."/>
            <person name="Okinaka R.T."/>
            <person name="Parson-Quintana B."/>
            <person name="Reilly L.P."/>
            <person name="Richardson P."/>
            <person name="Robinson D.L."/>
            <person name="Rubin E."/>
            <person name="Saunders E."/>
            <person name="Tapia R."/>
            <person name="Tesmer J.G."/>
            <person name="Thayer N."/>
            <person name="Thompson L.S."/>
            <person name="Tice H."/>
            <person name="Ticknor L.O."/>
            <person name="Wills P.L."/>
            <person name="Brettin T.S."/>
            <person name="Gilna P."/>
        </authorList>
    </citation>
    <scope>NUCLEOTIDE SEQUENCE [LARGE SCALE GENOMIC DNA]</scope>
    <source>
        <strain>ZK / E33L</strain>
    </source>
</reference>
<accession>Q63HH3</accession>